<sequence>MAVKIRLTRMGSKKKPFYRINVADSRAPRDGRFIETVGTYNPLVAENQITIKEDRVLEWLSKGAQPSDTVRNILSKAGVMAKFHDQKFSK</sequence>
<comment type="similarity">
    <text evidence="1">Belongs to the bacterial ribosomal protein bS16 family.</text>
</comment>
<accession>P66446</accession>
<accession>P58124</accession>
<accession>Q48ZF2</accession>
<evidence type="ECO:0000255" key="1">
    <source>
        <dbReference type="HAMAP-Rule" id="MF_00385"/>
    </source>
</evidence>
<evidence type="ECO:0000305" key="2"/>
<feature type="chain" id="PRO_0000167259" description="Small ribosomal subunit protein bS16">
    <location>
        <begin position="1"/>
        <end position="90"/>
    </location>
</feature>
<organism>
    <name type="scientific">Streptococcus pyogenes serotype M1</name>
    <dbReference type="NCBI Taxonomy" id="301447"/>
    <lineage>
        <taxon>Bacteria</taxon>
        <taxon>Bacillati</taxon>
        <taxon>Bacillota</taxon>
        <taxon>Bacilli</taxon>
        <taxon>Lactobacillales</taxon>
        <taxon>Streptococcaceae</taxon>
        <taxon>Streptococcus</taxon>
    </lineage>
</organism>
<proteinExistence type="inferred from homology"/>
<keyword id="KW-1185">Reference proteome</keyword>
<keyword id="KW-0687">Ribonucleoprotein</keyword>
<keyword id="KW-0689">Ribosomal protein</keyword>
<reference key="1">
    <citation type="journal article" date="2001" name="Proc. Natl. Acad. Sci. U.S.A.">
        <title>Complete genome sequence of an M1 strain of Streptococcus pyogenes.</title>
        <authorList>
            <person name="Ferretti J.J."/>
            <person name="McShan W.M."/>
            <person name="Ajdic D.J."/>
            <person name="Savic D.J."/>
            <person name="Savic G."/>
            <person name="Lyon K."/>
            <person name="Primeaux C."/>
            <person name="Sezate S."/>
            <person name="Suvorov A.N."/>
            <person name="Kenton S."/>
            <person name="Lai H.S."/>
            <person name="Lin S.P."/>
            <person name="Qian Y."/>
            <person name="Jia H.G."/>
            <person name="Najar F.Z."/>
            <person name="Ren Q."/>
            <person name="Zhu H."/>
            <person name="Song L."/>
            <person name="White J."/>
            <person name="Yuan X."/>
            <person name="Clifton S.W."/>
            <person name="Roe B.A."/>
            <person name="McLaughlin R.E."/>
        </authorList>
    </citation>
    <scope>NUCLEOTIDE SEQUENCE [LARGE SCALE GENOMIC DNA]</scope>
    <source>
        <strain>ATCC 700294 / SF370 / Serotype M1</strain>
    </source>
</reference>
<reference key="2">
    <citation type="journal article" date="2005" name="J. Infect. Dis.">
        <title>Evolutionary origin and emergence of a highly successful clone of serotype M1 group A Streptococcus involved multiple horizontal gene transfer events.</title>
        <authorList>
            <person name="Sumby P."/>
            <person name="Porcella S.F."/>
            <person name="Madrigal A.G."/>
            <person name="Barbian K.D."/>
            <person name="Virtaneva K."/>
            <person name="Ricklefs S.M."/>
            <person name="Sturdevant D.E."/>
            <person name="Graham M.R."/>
            <person name="Vuopio-Varkila J."/>
            <person name="Hoe N.P."/>
            <person name="Musser J.M."/>
        </authorList>
    </citation>
    <scope>NUCLEOTIDE SEQUENCE [LARGE SCALE GENOMIC DNA]</scope>
    <source>
        <strain>ATCC BAA-947 / MGAS5005 / Serotype M1</strain>
    </source>
</reference>
<name>RS16_STRP1</name>
<gene>
    <name evidence="1" type="primary">rpsP</name>
    <name type="ordered locus">SPy_0840</name>
    <name type="ordered locus">M5005_Spy0648</name>
</gene>
<dbReference type="EMBL" id="AE004092">
    <property type="protein sequence ID" value="AAK33770.1"/>
    <property type="molecule type" value="Genomic_DNA"/>
</dbReference>
<dbReference type="EMBL" id="CP000017">
    <property type="protein sequence ID" value="AAZ51266.1"/>
    <property type="molecule type" value="Genomic_DNA"/>
</dbReference>
<dbReference type="RefSeq" id="NP_269049.1">
    <property type="nucleotide sequence ID" value="NC_002737.2"/>
</dbReference>
<dbReference type="SMR" id="P66446"/>
<dbReference type="PaxDb" id="1314-HKU360_00662"/>
<dbReference type="KEGG" id="spy:SPy_0840"/>
<dbReference type="KEGG" id="spz:M5005_Spy0648"/>
<dbReference type="PATRIC" id="fig|160490.10.peg.718"/>
<dbReference type="HOGENOM" id="CLU_100590_5_0_9"/>
<dbReference type="OMA" id="GFYNPIA"/>
<dbReference type="PRO" id="PR:P66446"/>
<dbReference type="Proteomes" id="UP000000750">
    <property type="component" value="Chromosome"/>
</dbReference>
<dbReference type="GO" id="GO:0005737">
    <property type="term" value="C:cytoplasm"/>
    <property type="evidence" value="ECO:0007669"/>
    <property type="project" value="UniProtKB-ARBA"/>
</dbReference>
<dbReference type="GO" id="GO:0015935">
    <property type="term" value="C:small ribosomal subunit"/>
    <property type="evidence" value="ECO:0007669"/>
    <property type="project" value="TreeGrafter"/>
</dbReference>
<dbReference type="GO" id="GO:0003735">
    <property type="term" value="F:structural constituent of ribosome"/>
    <property type="evidence" value="ECO:0007669"/>
    <property type="project" value="InterPro"/>
</dbReference>
<dbReference type="GO" id="GO:0006412">
    <property type="term" value="P:translation"/>
    <property type="evidence" value="ECO:0007669"/>
    <property type="project" value="UniProtKB-UniRule"/>
</dbReference>
<dbReference type="FunFam" id="3.30.1320.10:FF:000002">
    <property type="entry name" value="30S ribosomal protein S16"/>
    <property type="match status" value="1"/>
</dbReference>
<dbReference type="Gene3D" id="3.30.1320.10">
    <property type="match status" value="1"/>
</dbReference>
<dbReference type="HAMAP" id="MF_00385">
    <property type="entry name" value="Ribosomal_bS16"/>
    <property type="match status" value="1"/>
</dbReference>
<dbReference type="InterPro" id="IPR000307">
    <property type="entry name" value="Ribosomal_bS16"/>
</dbReference>
<dbReference type="InterPro" id="IPR023803">
    <property type="entry name" value="Ribosomal_bS16_dom_sf"/>
</dbReference>
<dbReference type="NCBIfam" id="TIGR00002">
    <property type="entry name" value="S16"/>
    <property type="match status" value="1"/>
</dbReference>
<dbReference type="PANTHER" id="PTHR12919">
    <property type="entry name" value="30S RIBOSOMAL PROTEIN S16"/>
    <property type="match status" value="1"/>
</dbReference>
<dbReference type="PANTHER" id="PTHR12919:SF20">
    <property type="entry name" value="SMALL RIBOSOMAL SUBUNIT PROTEIN BS16M"/>
    <property type="match status" value="1"/>
</dbReference>
<dbReference type="Pfam" id="PF00886">
    <property type="entry name" value="Ribosomal_S16"/>
    <property type="match status" value="1"/>
</dbReference>
<dbReference type="SUPFAM" id="SSF54565">
    <property type="entry name" value="Ribosomal protein S16"/>
    <property type="match status" value="1"/>
</dbReference>
<protein>
    <recommendedName>
        <fullName evidence="1">Small ribosomal subunit protein bS16</fullName>
    </recommendedName>
    <alternativeName>
        <fullName evidence="2">30S ribosomal protein S16</fullName>
    </alternativeName>
</protein>